<sequence length="62" mass="6826">MSIIFQLVLTALVFFSFVMVVAVPVAYASPQNWDQSKPLLYVGSAIWIGLVLLVAILNFLVV</sequence>
<name>PSBZ_CROS5</name>
<reference key="1">
    <citation type="journal article" date="2008" name="Proc. Natl. Acad. Sci. U.S.A.">
        <title>The genome of Cyanothece 51142, a unicellular diazotrophic cyanobacterium important in the marine nitrogen cycle.</title>
        <authorList>
            <person name="Welsh E.A."/>
            <person name="Liberton M."/>
            <person name="Stoeckel J."/>
            <person name="Loh T."/>
            <person name="Elvitigala T."/>
            <person name="Wang C."/>
            <person name="Wollam A."/>
            <person name="Fulton R.S."/>
            <person name="Clifton S.W."/>
            <person name="Jacobs J.M."/>
            <person name="Aurora R."/>
            <person name="Ghosh B.K."/>
            <person name="Sherman L.A."/>
            <person name="Smith R.D."/>
            <person name="Wilson R.K."/>
            <person name="Pakrasi H.B."/>
        </authorList>
    </citation>
    <scope>NUCLEOTIDE SEQUENCE [LARGE SCALE GENOMIC DNA]</scope>
    <source>
        <strain>ATCC 51142 / BH68</strain>
    </source>
</reference>
<keyword id="KW-0472">Membrane</keyword>
<keyword id="KW-0602">Photosynthesis</keyword>
<keyword id="KW-0604">Photosystem II</keyword>
<keyword id="KW-0674">Reaction center</keyword>
<keyword id="KW-1185">Reference proteome</keyword>
<keyword id="KW-0793">Thylakoid</keyword>
<keyword id="KW-0812">Transmembrane</keyword>
<keyword id="KW-1133">Transmembrane helix</keyword>
<feature type="chain" id="PRO_1000147433" description="Photosystem II reaction center protein Z">
    <location>
        <begin position="1"/>
        <end position="62"/>
    </location>
</feature>
<feature type="transmembrane region" description="Helical" evidence="1">
    <location>
        <begin position="8"/>
        <end position="28"/>
    </location>
</feature>
<feature type="transmembrane region" description="Helical" evidence="1">
    <location>
        <begin position="41"/>
        <end position="61"/>
    </location>
</feature>
<accession>B1WWA0</accession>
<organism>
    <name type="scientific">Crocosphaera subtropica (strain ATCC 51142 / BH68)</name>
    <name type="common">Cyanothece sp. (strain ATCC 51142)</name>
    <dbReference type="NCBI Taxonomy" id="43989"/>
    <lineage>
        <taxon>Bacteria</taxon>
        <taxon>Bacillati</taxon>
        <taxon>Cyanobacteriota</taxon>
        <taxon>Cyanophyceae</taxon>
        <taxon>Oscillatoriophycideae</taxon>
        <taxon>Chroococcales</taxon>
        <taxon>Aphanothecaceae</taxon>
        <taxon>Crocosphaera</taxon>
        <taxon>Crocosphaera subtropica</taxon>
    </lineage>
</organism>
<protein>
    <recommendedName>
        <fullName evidence="1">Photosystem II reaction center protein Z</fullName>
        <shortName evidence="1">PSII-Z</shortName>
    </recommendedName>
</protein>
<proteinExistence type="inferred from homology"/>
<comment type="function">
    <text evidence="1">May control the interaction of photosystem II (PSII) cores with the light-harvesting antenna, regulates electron flow through the 2 photosystem reaction centers. PSII is a light-driven water plastoquinone oxidoreductase, using light energy to abstract electrons from H(2)O, generating a proton gradient subsequently used for ATP formation.</text>
</comment>
<comment type="subunit">
    <text evidence="1">PSII is composed of 1 copy each of membrane proteins PsbA, PsbB, PsbC, PsbD, PsbE, PsbF, PsbH, PsbI, PsbJ, PsbK, PsbL, PsbM, PsbT, PsbX, PsbY, PsbZ, Psb30/Ycf12, peripheral proteins PsbO, CyanoQ (PsbQ), PsbU, PsbV and a large number of cofactors. It forms dimeric complexes.</text>
</comment>
<comment type="subcellular location">
    <subcellularLocation>
        <location evidence="1">Cellular thylakoid membrane</location>
        <topology evidence="1">Multi-pass membrane protein</topology>
    </subcellularLocation>
</comment>
<comment type="similarity">
    <text evidence="1">Belongs to the PsbZ family.</text>
</comment>
<gene>
    <name evidence="1" type="primary">psbZ</name>
    <name type="ordered locus">cce_4680</name>
</gene>
<evidence type="ECO:0000255" key="1">
    <source>
        <dbReference type="HAMAP-Rule" id="MF_00644"/>
    </source>
</evidence>
<dbReference type="EMBL" id="CP000806">
    <property type="protein sequence ID" value="ACB54028.1"/>
    <property type="molecule type" value="Genomic_DNA"/>
</dbReference>
<dbReference type="RefSeq" id="WP_009543275.1">
    <property type="nucleotide sequence ID" value="NC_010546.1"/>
</dbReference>
<dbReference type="SMR" id="B1WWA0"/>
<dbReference type="STRING" id="43989.cce_4680"/>
<dbReference type="KEGG" id="cyt:cce_4680"/>
<dbReference type="eggNOG" id="ENOG5032ZB0">
    <property type="taxonomic scope" value="Bacteria"/>
</dbReference>
<dbReference type="HOGENOM" id="CLU_195286_1_0_3"/>
<dbReference type="OrthoDB" id="490783at2"/>
<dbReference type="Proteomes" id="UP000001203">
    <property type="component" value="Chromosome circular"/>
</dbReference>
<dbReference type="GO" id="GO:0009539">
    <property type="term" value="C:photosystem II reaction center"/>
    <property type="evidence" value="ECO:0007669"/>
    <property type="project" value="InterPro"/>
</dbReference>
<dbReference type="GO" id="GO:0031676">
    <property type="term" value="C:plasma membrane-derived thylakoid membrane"/>
    <property type="evidence" value="ECO:0007669"/>
    <property type="project" value="UniProtKB-SubCell"/>
</dbReference>
<dbReference type="GO" id="GO:0015979">
    <property type="term" value="P:photosynthesis"/>
    <property type="evidence" value="ECO:0007669"/>
    <property type="project" value="UniProtKB-UniRule"/>
</dbReference>
<dbReference type="GO" id="GO:0042549">
    <property type="term" value="P:photosystem II stabilization"/>
    <property type="evidence" value="ECO:0007669"/>
    <property type="project" value="InterPro"/>
</dbReference>
<dbReference type="Gene3D" id="1.10.287.740">
    <property type="entry name" value="Photosystem II PsbZ, reaction centre"/>
    <property type="match status" value="1"/>
</dbReference>
<dbReference type="HAMAP" id="MF_00644">
    <property type="entry name" value="PSII_PsbZ"/>
    <property type="match status" value="1"/>
</dbReference>
<dbReference type="InterPro" id="IPR002644">
    <property type="entry name" value="PSII_PsbZ"/>
</dbReference>
<dbReference type="InterPro" id="IPR036512">
    <property type="entry name" value="PSII_PsbZ_sf"/>
</dbReference>
<dbReference type="NCBIfam" id="TIGR03043">
    <property type="entry name" value="PS_II_psbZ"/>
    <property type="match status" value="1"/>
</dbReference>
<dbReference type="PANTHER" id="PTHR34971">
    <property type="entry name" value="PHOTOSYSTEM II REACTION CENTER PROTEIN Z"/>
    <property type="match status" value="1"/>
</dbReference>
<dbReference type="PANTHER" id="PTHR34971:SF2">
    <property type="entry name" value="PHOTOSYSTEM II REACTION CENTER PROTEIN Z"/>
    <property type="match status" value="1"/>
</dbReference>
<dbReference type="Pfam" id="PF01737">
    <property type="entry name" value="Ycf9"/>
    <property type="match status" value="1"/>
</dbReference>
<dbReference type="SUPFAM" id="SSF161055">
    <property type="entry name" value="PsbZ-like"/>
    <property type="match status" value="1"/>
</dbReference>